<accession>P0DPM1</accession>
<evidence type="ECO:0000250" key="1"/>
<evidence type="ECO:0000250" key="2">
    <source>
        <dbReference type="UniProtKB" id="P01519"/>
    </source>
</evidence>
<evidence type="ECO:0000255" key="3"/>
<evidence type="ECO:0000269" key="4">
    <source>
    </source>
</evidence>
<evidence type="ECO:0000305" key="5"/>
<evidence type="ECO:0000305" key="6">
    <source>
    </source>
</evidence>
<keyword id="KW-0008">Acetylcholine receptor inhibiting toxin</keyword>
<keyword id="KW-0027">Amidation</keyword>
<keyword id="KW-1015">Disulfide bond</keyword>
<keyword id="KW-0528">Neurotoxin</keyword>
<keyword id="KW-0558">Oxidation</keyword>
<keyword id="KW-0629">Postsynaptic neurotoxin</keyword>
<keyword id="KW-0964">Secreted</keyword>
<keyword id="KW-0732">Signal</keyword>
<keyword id="KW-0800">Toxin</keyword>
<feature type="signal peptide" evidence="3">
    <location>
        <begin position="1"/>
        <end position="16"/>
    </location>
</feature>
<feature type="propeptide" id="PRO_0000445060" evidence="5">
    <location>
        <begin position="17"/>
        <end position="43"/>
    </location>
</feature>
<feature type="peptide" id="PRO_0000445061" description="Alpha-conotoxin-like Sm1.3" evidence="6">
    <location>
        <begin position="44"/>
        <end position="59"/>
    </location>
</feature>
<feature type="modified residue" description="Methionine sulfoxide; partial" evidence="4">
    <location>
        <position position="58"/>
    </location>
</feature>
<feature type="modified residue" description="Cysteine amide; partial" evidence="4">
    <location>
        <position position="59"/>
    </location>
</feature>
<feature type="disulfide bond" evidence="2">
    <location>
        <begin position="45"/>
        <end position="51"/>
    </location>
</feature>
<feature type="disulfide bond" evidence="2">
    <location>
        <begin position="46"/>
        <end position="59"/>
    </location>
</feature>
<dbReference type="EMBL" id="AR584824">
    <property type="status" value="NOT_ANNOTATED_CDS"/>
    <property type="molecule type" value="Genomic_DNA"/>
</dbReference>
<dbReference type="GO" id="GO:0005576">
    <property type="term" value="C:extracellular region"/>
    <property type="evidence" value="ECO:0007669"/>
    <property type="project" value="UniProtKB-SubCell"/>
</dbReference>
<dbReference type="GO" id="GO:0035792">
    <property type="term" value="C:host cell postsynaptic membrane"/>
    <property type="evidence" value="ECO:0007669"/>
    <property type="project" value="UniProtKB-KW"/>
</dbReference>
<dbReference type="GO" id="GO:0030550">
    <property type="term" value="F:acetylcholine receptor inhibitor activity"/>
    <property type="evidence" value="ECO:0007669"/>
    <property type="project" value="UniProtKB-KW"/>
</dbReference>
<dbReference type="GO" id="GO:0090729">
    <property type="term" value="F:toxin activity"/>
    <property type="evidence" value="ECO:0007669"/>
    <property type="project" value="UniProtKB-KW"/>
</dbReference>
<dbReference type="InterPro" id="IPR009958">
    <property type="entry name" value="Conotoxin_a-typ"/>
</dbReference>
<dbReference type="Pfam" id="PF07365">
    <property type="entry name" value="Toxin_8"/>
    <property type="match status" value="1"/>
</dbReference>
<protein>
    <recommendedName>
        <fullName evidence="5">Alpha-conotoxin-like Sm1.3</fullName>
    </recommendedName>
</protein>
<sequence>MFTVFLLVVLATTVVSSPSDRASDGRNAAANEKASDVIALALKGCCSNPVCHLEHSNMCGRRR</sequence>
<proteinExistence type="evidence at protein level"/>
<name>CA13_CONSE</name>
<reference key="1">
    <citation type="patent" date="2004-09-28" number="US6797808">
        <title>Alpha-conotoxin peptides.</title>
        <authorList>
            <person name="Watkins M."/>
            <person name="Olivera B.M."/>
            <person name="Hillyard D.R."/>
            <person name="McIntosh J.M."/>
            <person name="Jones R.M."/>
        </authorList>
    </citation>
    <scope>NUCLEOTIDE SEQUENCE [GENOMIC DNA]</scope>
</reference>
<reference key="2">
    <citation type="journal article" date="2012" name="J. Proteome Res.">
        <title>Constrained de novo sequencing of conotoxins.</title>
        <authorList>
            <person name="Bhatia S."/>
            <person name="Kil Y.J."/>
            <person name="Ueberheide B."/>
            <person name="Chait B.T."/>
            <person name="Tayo L."/>
            <person name="Cruz L."/>
            <person name="Lu B."/>
            <person name="Yates J.R. III"/>
            <person name="Bern M."/>
        </authorList>
    </citation>
    <scope>IDENTIFICATION BY MASS SPECTROMETRY</scope>
    <scope>SUBCELLULAR LOCATION</scope>
    <scope>OXIDATION AT MET-58</scope>
    <scope>AMIDATION AT CYS-59</scope>
    <source>
        <tissue>Venom</tissue>
    </source>
</reference>
<comment type="function">
    <text evidence="1">Alpha-conotoxins act on postsynaptic membranes, they bind to the nicotinic acetylcholine receptors (nAChR) and thus inhibit them.</text>
</comment>
<comment type="subcellular location">
    <subcellularLocation>
        <location evidence="4">Secreted</location>
    </subcellularLocation>
</comment>
<comment type="tissue specificity">
    <text evidence="6">Expressed by the venom duct.</text>
</comment>
<comment type="domain">
    <text evidence="5">The cysteine framework is I (CC-C-C). Alpha3/5 pattern.</text>
</comment>
<comment type="similarity">
    <text evidence="5">Belongs to the conotoxin A superfamily.</text>
</comment>
<organism>
    <name type="scientific">Conus stercusmuscarum</name>
    <name type="common">Fly-specked cone</name>
    <dbReference type="NCBI Taxonomy" id="89452"/>
    <lineage>
        <taxon>Eukaryota</taxon>
        <taxon>Metazoa</taxon>
        <taxon>Spiralia</taxon>
        <taxon>Lophotrochozoa</taxon>
        <taxon>Mollusca</taxon>
        <taxon>Gastropoda</taxon>
        <taxon>Caenogastropoda</taxon>
        <taxon>Neogastropoda</taxon>
        <taxon>Conoidea</taxon>
        <taxon>Conidae</taxon>
        <taxon>Conus</taxon>
        <taxon>Pionoconus</taxon>
    </lineage>
</organism>